<dbReference type="EC" id="4.2.1.96" evidence="1"/>
<dbReference type="EMBL" id="CP000868">
    <property type="protein sequence ID" value="ABX13772.1"/>
    <property type="molecule type" value="Genomic_DNA"/>
</dbReference>
<dbReference type="EMBL" id="AP009385">
    <property type="protein sequence ID" value="BAG45062.1"/>
    <property type="molecule type" value="Genomic_DNA"/>
</dbReference>
<dbReference type="RefSeq" id="WP_006401492.1">
    <property type="nucleotide sequence ID" value="NC_010084.1"/>
</dbReference>
<dbReference type="SMR" id="A9AJD5"/>
<dbReference type="STRING" id="395019.BMULJ_03188"/>
<dbReference type="GeneID" id="89568456"/>
<dbReference type="KEGG" id="bmj:BMULJ_03188"/>
<dbReference type="KEGG" id="bmu:Bmul_0077"/>
<dbReference type="eggNOG" id="COG2154">
    <property type="taxonomic scope" value="Bacteria"/>
</dbReference>
<dbReference type="HOGENOM" id="CLU_081974_3_2_4"/>
<dbReference type="Proteomes" id="UP000008815">
    <property type="component" value="Chromosome 1"/>
</dbReference>
<dbReference type="GO" id="GO:0008124">
    <property type="term" value="F:4-alpha-hydroxytetrahydrobiopterin dehydratase activity"/>
    <property type="evidence" value="ECO:0007669"/>
    <property type="project" value="UniProtKB-UniRule"/>
</dbReference>
<dbReference type="GO" id="GO:0006729">
    <property type="term" value="P:tetrahydrobiopterin biosynthetic process"/>
    <property type="evidence" value="ECO:0007669"/>
    <property type="project" value="InterPro"/>
</dbReference>
<dbReference type="CDD" id="cd00914">
    <property type="entry name" value="PCD_DCoH_subfamily_b"/>
    <property type="match status" value="1"/>
</dbReference>
<dbReference type="Gene3D" id="3.30.1360.20">
    <property type="entry name" value="Transcriptional coactivator/pterin dehydratase"/>
    <property type="match status" value="1"/>
</dbReference>
<dbReference type="HAMAP" id="MF_00434">
    <property type="entry name" value="Pterin_4_alpha"/>
    <property type="match status" value="1"/>
</dbReference>
<dbReference type="InterPro" id="IPR036428">
    <property type="entry name" value="PCD_sf"/>
</dbReference>
<dbReference type="InterPro" id="IPR001533">
    <property type="entry name" value="Pterin_deHydtase"/>
</dbReference>
<dbReference type="NCBIfam" id="NF002017">
    <property type="entry name" value="PRK00823.1-2"/>
    <property type="match status" value="1"/>
</dbReference>
<dbReference type="NCBIfam" id="NF002018">
    <property type="entry name" value="PRK00823.1-3"/>
    <property type="match status" value="1"/>
</dbReference>
<dbReference type="NCBIfam" id="NF002020">
    <property type="entry name" value="PRK00823.1-5"/>
    <property type="match status" value="1"/>
</dbReference>
<dbReference type="PANTHER" id="PTHR12599">
    <property type="entry name" value="PTERIN-4-ALPHA-CARBINOLAMINE DEHYDRATASE"/>
    <property type="match status" value="1"/>
</dbReference>
<dbReference type="PANTHER" id="PTHR12599:SF0">
    <property type="entry name" value="PTERIN-4-ALPHA-CARBINOLAMINE DEHYDRATASE"/>
    <property type="match status" value="1"/>
</dbReference>
<dbReference type="Pfam" id="PF01329">
    <property type="entry name" value="Pterin_4a"/>
    <property type="match status" value="1"/>
</dbReference>
<dbReference type="SUPFAM" id="SSF55248">
    <property type="entry name" value="PCD-like"/>
    <property type="match status" value="1"/>
</dbReference>
<protein>
    <recommendedName>
        <fullName evidence="1">Putative pterin-4-alpha-carbinolamine dehydratase</fullName>
        <shortName evidence="1">PHS</shortName>
        <ecNumber evidence="1">4.2.1.96</ecNumber>
    </recommendedName>
    <alternativeName>
        <fullName evidence="1">4-alpha-hydroxy-tetrahydropterin dehydratase</fullName>
    </alternativeName>
    <alternativeName>
        <fullName evidence="1">Pterin carbinolamine dehydratase</fullName>
        <shortName evidence="1">PCD</shortName>
    </alternativeName>
</protein>
<evidence type="ECO:0000255" key="1">
    <source>
        <dbReference type="HAMAP-Rule" id="MF_00434"/>
    </source>
</evidence>
<gene>
    <name type="ordered locus">Bmul_0077</name>
    <name type="ordered locus">BMULJ_03188</name>
</gene>
<keyword id="KW-0456">Lyase</keyword>
<keyword id="KW-1185">Reference proteome</keyword>
<accession>A9AJD5</accession>
<name>PHS_BURM1</name>
<reference key="1">
    <citation type="submission" date="2007-10" db="EMBL/GenBank/DDBJ databases">
        <title>Complete sequence of chromosome 1 of Burkholderia multivorans ATCC 17616.</title>
        <authorList>
            <person name="Copeland A."/>
            <person name="Lucas S."/>
            <person name="Lapidus A."/>
            <person name="Barry K."/>
            <person name="Glavina del Rio T."/>
            <person name="Dalin E."/>
            <person name="Tice H."/>
            <person name="Pitluck S."/>
            <person name="Chain P."/>
            <person name="Malfatti S."/>
            <person name="Shin M."/>
            <person name="Vergez L."/>
            <person name="Schmutz J."/>
            <person name="Larimer F."/>
            <person name="Land M."/>
            <person name="Hauser L."/>
            <person name="Kyrpides N."/>
            <person name="Kim E."/>
            <person name="Tiedje J."/>
            <person name="Richardson P."/>
        </authorList>
    </citation>
    <scope>NUCLEOTIDE SEQUENCE [LARGE SCALE GENOMIC DNA]</scope>
    <source>
        <strain>ATCC 17616 / 249</strain>
    </source>
</reference>
<reference key="2">
    <citation type="submission" date="2007-04" db="EMBL/GenBank/DDBJ databases">
        <title>Complete genome sequence of Burkholderia multivorans ATCC 17616.</title>
        <authorList>
            <person name="Ohtsubo Y."/>
            <person name="Yamashita A."/>
            <person name="Kurokawa K."/>
            <person name="Takami H."/>
            <person name="Yuhara S."/>
            <person name="Nishiyama E."/>
            <person name="Endo R."/>
            <person name="Miyazaki R."/>
            <person name="Ono A."/>
            <person name="Yano K."/>
            <person name="Ito M."/>
            <person name="Sota M."/>
            <person name="Yuji N."/>
            <person name="Hattori M."/>
            <person name="Tsuda M."/>
        </authorList>
    </citation>
    <scope>NUCLEOTIDE SEQUENCE [LARGE SCALE GENOMIC DNA]</scope>
    <source>
        <strain>ATCC 17616 / 249</strain>
    </source>
</reference>
<comment type="catalytic activity">
    <reaction evidence="1">
        <text>(4aS,6R)-4a-hydroxy-L-erythro-5,6,7,8-tetrahydrobiopterin = (6R)-L-erythro-6,7-dihydrobiopterin + H2O</text>
        <dbReference type="Rhea" id="RHEA:11920"/>
        <dbReference type="ChEBI" id="CHEBI:15377"/>
        <dbReference type="ChEBI" id="CHEBI:15642"/>
        <dbReference type="ChEBI" id="CHEBI:43120"/>
        <dbReference type="EC" id="4.2.1.96"/>
    </reaction>
</comment>
<comment type="similarity">
    <text evidence="1">Belongs to the pterin-4-alpha-carbinolamine dehydratase family.</text>
</comment>
<proteinExistence type="inferred from homology"/>
<feature type="chain" id="PRO_1000192912" description="Putative pterin-4-alpha-carbinolamine dehydratase">
    <location>
        <begin position="1"/>
        <end position="102"/>
    </location>
</feature>
<organism>
    <name type="scientific">Burkholderia multivorans (strain ATCC 17616 / 249)</name>
    <dbReference type="NCBI Taxonomy" id="395019"/>
    <lineage>
        <taxon>Bacteria</taxon>
        <taxon>Pseudomonadati</taxon>
        <taxon>Pseudomonadota</taxon>
        <taxon>Betaproteobacteria</taxon>
        <taxon>Burkholderiales</taxon>
        <taxon>Burkholderiaceae</taxon>
        <taxon>Burkholderia</taxon>
        <taxon>Burkholderia cepacia complex</taxon>
    </lineage>
</organism>
<sequence>MVHKLTSEERKTRLERLPQWSAVPGRDAIQRSLRFADFNEAFGFMTRVAIKAQEMNHHPEWFNVYNRVDVTLSTHDADGLTERDIELALFIDAVAAHARPAS</sequence>